<accession>A7FW56</accession>
<sequence>MNVSAIVVEYNPMHNGHLYHIKKTKKLTNCDALVCIMSGNFVQRGFPSILDKWTKANMAISNGVDLVIELPTLYSLSSAEFFSFGAVSILDSLNIINSICFGSEIGNINALQDIATTLLEEPLEYKILLKNYLDKGISFAKARNLALVELNRDNKIMSENINKILSLSNNILGIEYLKSLLLLNSSIKPFTITREGADYKDENLHEEYSSASSIRKYLKENKNINILKDFLPLEGFLEFKRLITKGYNFSMEDSMINYIRYKYISGYKNLHNLIDVSEGLDNRIYKSLEKNFTYDSLVGEIKSKRYAYSRIGRILCQYFIGFENYDLNSLLKSTPNYMRVLASNEMGLKVLKKIKKHSSTNIYTKLPKNTNTLLSLDIKATNAYSLLNNNIRFNEDYFRSPTIIKNTIY</sequence>
<proteinExistence type="inferred from homology"/>
<protein>
    <recommendedName>
        <fullName evidence="1">tRNA(Met) cytidine acetate ligase</fullName>
        <ecNumber evidence="1">6.3.4.-</ecNumber>
    </recommendedName>
</protein>
<gene>
    <name evidence="1" type="primary">tmcAL</name>
    <name type="ordered locus">CLB_2363</name>
</gene>
<reference key="1">
    <citation type="journal article" date="2007" name="PLoS ONE">
        <title>Analysis of the neurotoxin complex genes in Clostridium botulinum A1-A4 and B1 strains: BoNT/A3, /Ba4 and /B1 clusters are located within plasmids.</title>
        <authorList>
            <person name="Smith T.J."/>
            <person name="Hill K.K."/>
            <person name="Foley B.T."/>
            <person name="Detter J.C."/>
            <person name="Munk A.C."/>
            <person name="Bruce D.C."/>
            <person name="Doggett N.A."/>
            <person name="Smith L.A."/>
            <person name="Marks J.D."/>
            <person name="Xie G."/>
            <person name="Brettin T.S."/>
        </authorList>
    </citation>
    <scope>NUCLEOTIDE SEQUENCE [LARGE SCALE GENOMIC DNA]</scope>
    <source>
        <strain>ATCC 19397 / Type A</strain>
    </source>
</reference>
<evidence type="ECO:0000255" key="1">
    <source>
        <dbReference type="HAMAP-Rule" id="MF_01539"/>
    </source>
</evidence>
<keyword id="KW-0067">ATP-binding</keyword>
<keyword id="KW-0963">Cytoplasm</keyword>
<keyword id="KW-0436">Ligase</keyword>
<keyword id="KW-0547">Nucleotide-binding</keyword>
<keyword id="KW-0694">RNA-binding</keyword>
<keyword id="KW-0819">tRNA processing</keyword>
<keyword id="KW-0820">tRNA-binding</keyword>
<name>TMCAL_CLOB1</name>
<dbReference type="EC" id="6.3.4.-" evidence="1"/>
<dbReference type="EMBL" id="CP000726">
    <property type="protein sequence ID" value="ABS35311.1"/>
    <property type="molecule type" value="Genomic_DNA"/>
</dbReference>
<dbReference type="RefSeq" id="WP_003388463.1">
    <property type="nucleotide sequence ID" value="NC_009697.1"/>
</dbReference>
<dbReference type="SMR" id="A7FW56"/>
<dbReference type="KEGG" id="cba:CLB_2363"/>
<dbReference type="HOGENOM" id="CLU_038915_0_1_9"/>
<dbReference type="GO" id="GO:0005737">
    <property type="term" value="C:cytoplasm"/>
    <property type="evidence" value="ECO:0007669"/>
    <property type="project" value="UniProtKB-SubCell"/>
</dbReference>
<dbReference type="GO" id="GO:0005524">
    <property type="term" value="F:ATP binding"/>
    <property type="evidence" value="ECO:0007669"/>
    <property type="project" value="UniProtKB-KW"/>
</dbReference>
<dbReference type="GO" id="GO:0016879">
    <property type="term" value="F:ligase activity, forming carbon-nitrogen bonds"/>
    <property type="evidence" value="ECO:0007669"/>
    <property type="project" value="UniProtKB-UniRule"/>
</dbReference>
<dbReference type="GO" id="GO:0000049">
    <property type="term" value="F:tRNA binding"/>
    <property type="evidence" value="ECO:0007669"/>
    <property type="project" value="UniProtKB-KW"/>
</dbReference>
<dbReference type="GO" id="GO:0006400">
    <property type="term" value="P:tRNA modification"/>
    <property type="evidence" value="ECO:0007669"/>
    <property type="project" value="UniProtKB-UniRule"/>
</dbReference>
<dbReference type="Gene3D" id="3.40.50.620">
    <property type="entry name" value="HUPs"/>
    <property type="match status" value="1"/>
</dbReference>
<dbReference type="HAMAP" id="MF_01539">
    <property type="entry name" value="TmcAL"/>
    <property type="match status" value="1"/>
</dbReference>
<dbReference type="InterPro" id="IPR014729">
    <property type="entry name" value="Rossmann-like_a/b/a_fold"/>
</dbReference>
<dbReference type="InterPro" id="IPR008513">
    <property type="entry name" value="tRNA(Met)_cyd_acetate_ligase"/>
</dbReference>
<dbReference type="NCBIfam" id="NF010191">
    <property type="entry name" value="PRK13670.1"/>
    <property type="match status" value="1"/>
</dbReference>
<dbReference type="PANTHER" id="PTHR37825">
    <property type="entry name" value="TRNA(MET) CYTIDINE ACETATE LIGASE"/>
    <property type="match status" value="1"/>
</dbReference>
<dbReference type="PANTHER" id="PTHR37825:SF1">
    <property type="entry name" value="TRNA(MET) CYTIDINE ACETATE LIGASE"/>
    <property type="match status" value="1"/>
</dbReference>
<dbReference type="Pfam" id="PF05636">
    <property type="entry name" value="HIGH_NTase1"/>
    <property type="match status" value="1"/>
</dbReference>
<dbReference type="SUPFAM" id="SSF52374">
    <property type="entry name" value="Nucleotidylyl transferase"/>
    <property type="match status" value="1"/>
</dbReference>
<comment type="function">
    <text evidence="1">Catalyzes the formation of N(4)-acetylcytidine (ac(4)C) at the wobble position of elongator tRNA(Met), using acetate and ATP as substrates. First activates an acetate ion to form acetyladenylate (Ac-AMP) and then transfers the acetyl group to tRNA to form ac(4)C34.</text>
</comment>
<comment type="catalytic activity">
    <reaction evidence="1">
        <text>cytidine(34) in elongator tRNA(Met) + acetate + ATP = N(4)-acetylcytidine(34) in elongator tRNA(Met) + AMP + diphosphate</text>
        <dbReference type="Rhea" id="RHEA:58144"/>
        <dbReference type="Rhea" id="RHEA-COMP:10693"/>
        <dbReference type="Rhea" id="RHEA-COMP:10694"/>
        <dbReference type="ChEBI" id="CHEBI:30089"/>
        <dbReference type="ChEBI" id="CHEBI:30616"/>
        <dbReference type="ChEBI" id="CHEBI:33019"/>
        <dbReference type="ChEBI" id="CHEBI:74900"/>
        <dbReference type="ChEBI" id="CHEBI:82748"/>
        <dbReference type="ChEBI" id="CHEBI:456215"/>
    </reaction>
</comment>
<comment type="subcellular location">
    <subcellularLocation>
        <location evidence="1">Cytoplasm</location>
    </subcellularLocation>
</comment>
<comment type="similarity">
    <text evidence="1">Belongs to the TmcAL family.</text>
</comment>
<feature type="chain" id="PRO_1000068749" description="tRNA(Met) cytidine acetate ligase">
    <location>
        <begin position="1"/>
        <end position="409"/>
    </location>
</feature>
<feature type="binding site" evidence="1">
    <location>
        <begin position="7"/>
        <end position="20"/>
    </location>
    <ligand>
        <name>ATP</name>
        <dbReference type="ChEBI" id="CHEBI:30616"/>
    </ligand>
</feature>
<feature type="binding site" evidence="1">
    <location>
        <position position="102"/>
    </location>
    <ligand>
        <name>ATP</name>
        <dbReference type="ChEBI" id="CHEBI:30616"/>
    </ligand>
</feature>
<feature type="binding site" evidence="1">
    <location>
        <position position="169"/>
    </location>
    <ligand>
        <name>ATP</name>
        <dbReference type="ChEBI" id="CHEBI:30616"/>
    </ligand>
</feature>
<feature type="binding site" evidence="1">
    <location>
        <position position="194"/>
    </location>
    <ligand>
        <name>ATP</name>
        <dbReference type="ChEBI" id="CHEBI:30616"/>
    </ligand>
</feature>
<organism>
    <name type="scientific">Clostridium botulinum (strain ATCC 19397 / Type A)</name>
    <dbReference type="NCBI Taxonomy" id="441770"/>
    <lineage>
        <taxon>Bacteria</taxon>
        <taxon>Bacillati</taxon>
        <taxon>Bacillota</taxon>
        <taxon>Clostridia</taxon>
        <taxon>Eubacteriales</taxon>
        <taxon>Clostridiaceae</taxon>
        <taxon>Clostridium</taxon>
    </lineage>
</organism>